<protein>
    <recommendedName>
        <fullName evidence="1">Small ribosomal subunit protein uS4</fullName>
    </recommendedName>
    <alternativeName>
        <fullName evidence="2">30S ribosomal protein S4</fullName>
    </alternativeName>
</protein>
<sequence length="205" mass="23967">MSRYTGSIFRKSRRLGFSILETGKEFAKGKQRRYAPGLHGLRRSKPSDYGVHLREKQKVRFMYGLSEKQFRNTYRKATKKTGIAGTLFLQALESRLDNSVYRAGFAETRRQARQLVNHGHFLVNNKKVDIPSFQLKQGDIFELTTRKDGKIRKNQQILTSLETRTPAAWLEVDKDNFKVVFNRMPERSELNQEIKESLIVEFYSK</sequence>
<name>RS4_MESHJ</name>
<gene>
    <name evidence="1" type="primary">rpsD</name>
    <name type="ordered locus">MHJ_0577</name>
</gene>
<proteinExistence type="inferred from homology"/>
<keyword id="KW-0687">Ribonucleoprotein</keyword>
<keyword id="KW-0689">Ribosomal protein</keyword>
<keyword id="KW-0694">RNA-binding</keyword>
<keyword id="KW-0699">rRNA-binding</keyword>
<feature type="chain" id="PRO_0000228902" description="Small ribosomal subunit protein uS4">
    <location>
        <begin position="1"/>
        <end position="205"/>
    </location>
</feature>
<feature type="domain" description="S4 RNA-binding" evidence="1">
    <location>
        <begin position="94"/>
        <end position="154"/>
    </location>
</feature>
<organism>
    <name type="scientific">Mesomycoplasma hyopneumoniae (strain J / ATCC 25934 / NCTC 10110)</name>
    <name type="common">Mycoplasma hyopneumoniae</name>
    <dbReference type="NCBI Taxonomy" id="262719"/>
    <lineage>
        <taxon>Bacteria</taxon>
        <taxon>Bacillati</taxon>
        <taxon>Mycoplasmatota</taxon>
        <taxon>Mycoplasmoidales</taxon>
        <taxon>Metamycoplasmataceae</taxon>
        <taxon>Mesomycoplasma</taxon>
    </lineage>
</organism>
<evidence type="ECO:0000255" key="1">
    <source>
        <dbReference type="HAMAP-Rule" id="MF_01306"/>
    </source>
</evidence>
<evidence type="ECO:0000305" key="2"/>
<comment type="function">
    <text evidence="1">One of the primary rRNA binding proteins, it binds directly to 16S rRNA where it nucleates assembly of the body of the 30S subunit.</text>
</comment>
<comment type="function">
    <text evidence="1">With S5 and S12 plays an important role in translational accuracy.</text>
</comment>
<comment type="subunit">
    <text evidence="1">Part of the 30S ribosomal subunit. Contacts protein S5. The interaction surface between S4 and S5 is involved in control of translational fidelity.</text>
</comment>
<comment type="similarity">
    <text evidence="1">Belongs to the universal ribosomal protein uS4 family.</text>
</comment>
<reference key="1">
    <citation type="journal article" date="2005" name="J. Bacteriol.">
        <title>Swine and poultry pathogens: the complete genome sequences of two strains of Mycoplasma hyopneumoniae and a strain of Mycoplasma synoviae.</title>
        <authorList>
            <person name="Vasconcelos A.T.R."/>
            <person name="Ferreira H.B."/>
            <person name="Bizarro C.V."/>
            <person name="Bonatto S.L."/>
            <person name="Carvalho M.O."/>
            <person name="Pinto P.M."/>
            <person name="Almeida D.F."/>
            <person name="Almeida L.G.P."/>
            <person name="Almeida R."/>
            <person name="Alves-Junior L."/>
            <person name="Assuncao E.N."/>
            <person name="Azevedo V.A.C."/>
            <person name="Bogo M.R."/>
            <person name="Brigido M.M."/>
            <person name="Brocchi M."/>
            <person name="Burity H.A."/>
            <person name="Camargo A.A."/>
            <person name="Camargo S.S."/>
            <person name="Carepo M.S."/>
            <person name="Carraro D.M."/>
            <person name="de Mattos Cascardo J.C."/>
            <person name="Castro L.A."/>
            <person name="Cavalcanti G."/>
            <person name="Chemale G."/>
            <person name="Collevatti R.G."/>
            <person name="Cunha C.W."/>
            <person name="Dallagiovanna B."/>
            <person name="Dambros B.P."/>
            <person name="Dellagostin O.A."/>
            <person name="Falcao C."/>
            <person name="Fantinatti-Garboggini F."/>
            <person name="Felipe M.S.S."/>
            <person name="Fiorentin L."/>
            <person name="Franco G.R."/>
            <person name="Freitas N.S.A."/>
            <person name="Frias D."/>
            <person name="Grangeiro T.B."/>
            <person name="Grisard E.C."/>
            <person name="Guimaraes C.T."/>
            <person name="Hungria M."/>
            <person name="Jardim S.N."/>
            <person name="Krieger M.A."/>
            <person name="Laurino J.P."/>
            <person name="Lima L.F.A."/>
            <person name="Lopes M.I."/>
            <person name="Loreto E.L.S."/>
            <person name="Madeira H.M.F."/>
            <person name="Manfio G.P."/>
            <person name="Maranhao A.Q."/>
            <person name="Martinkovics C.T."/>
            <person name="Medeiros S.R.B."/>
            <person name="Moreira M.A.M."/>
            <person name="Neiva M."/>
            <person name="Ramalho-Neto C.E."/>
            <person name="Nicolas M.F."/>
            <person name="Oliveira S.C."/>
            <person name="Paixao R.F.C."/>
            <person name="Pedrosa F.O."/>
            <person name="Pena S.D.J."/>
            <person name="Pereira M."/>
            <person name="Pereira-Ferrari L."/>
            <person name="Piffer I."/>
            <person name="Pinto L.S."/>
            <person name="Potrich D.P."/>
            <person name="Salim A.C.M."/>
            <person name="Santos F.R."/>
            <person name="Schmitt R."/>
            <person name="Schneider M.P.C."/>
            <person name="Schrank A."/>
            <person name="Schrank I.S."/>
            <person name="Schuck A.F."/>
            <person name="Seuanez H.N."/>
            <person name="Silva D.W."/>
            <person name="Silva R."/>
            <person name="Silva S.C."/>
            <person name="Soares C.M.A."/>
            <person name="Souza K.R.L."/>
            <person name="Souza R.C."/>
            <person name="Staats C.C."/>
            <person name="Steffens M.B.R."/>
            <person name="Teixeira S.M.R."/>
            <person name="Urmenyi T.P."/>
            <person name="Vainstein M.H."/>
            <person name="Zuccherato L.W."/>
            <person name="Simpson A.J.G."/>
            <person name="Zaha A."/>
        </authorList>
    </citation>
    <scope>NUCLEOTIDE SEQUENCE [LARGE SCALE GENOMIC DNA]</scope>
    <source>
        <strain>J / ATCC 25934 / NCTC 10110</strain>
    </source>
</reference>
<accession>Q4A9B0</accession>
<dbReference type="EMBL" id="AE017243">
    <property type="protein sequence ID" value="AAZ44661.1"/>
    <property type="molecule type" value="Genomic_DNA"/>
</dbReference>
<dbReference type="RefSeq" id="WP_011206424.1">
    <property type="nucleotide sequence ID" value="NC_007295.1"/>
</dbReference>
<dbReference type="SMR" id="Q4A9B0"/>
<dbReference type="GeneID" id="41334874"/>
<dbReference type="KEGG" id="mhj:MHJ_0577"/>
<dbReference type="eggNOG" id="COG0522">
    <property type="taxonomic scope" value="Bacteria"/>
</dbReference>
<dbReference type="HOGENOM" id="CLU_092403_0_1_14"/>
<dbReference type="OrthoDB" id="9803672at2"/>
<dbReference type="Proteomes" id="UP000000548">
    <property type="component" value="Chromosome"/>
</dbReference>
<dbReference type="GO" id="GO:0015935">
    <property type="term" value="C:small ribosomal subunit"/>
    <property type="evidence" value="ECO:0007669"/>
    <property type="project" value="InterPro"/>
</dbReference>
<dbReference type="GO" id="GO:0019843">
    <property type="term" value="F:rRNA binding"/>
    <property type="evidence" value="ECO:0007669"/>
    <property type="project" value="UniProtKB-UniRule"/>
</dbReference>
<dbReference type="GO" id="GO:0003735">
    <property type="term" value="F:structural constituent of ribosome"/>
    <property type="evidence" value="ECO:0007669"/>
    <property type="project" value="InterPro"/>
</dbReference>
<dbReference type="GO" id="GO:0042274">
    <property type="term" value="P:ribosomal small subunit biogenesis"/>
    <property type="evidence" value="ECO:0007669"/>
    <property type="project" value="TreeGrafter"/>
</dbReference>
<dbReference type="GO" id="GO:0006412">
    <property type="term" value="P:translation"/>
    <property type="evidence" value="ECO:0007669"/>
    <property type="project" value="UniProtKB-UniRule"/>
</dbReference>
<dbReference type="CDD" id="cd00165">
    <property type="entry name" value="S4"/>
    <property type="match status" value="1"/>
</dbReference>
<dbReference type="FunFam" id="3.10.290.10:FF:000001">
    <property type="entry name" value="30S ribosomal protein S4"/>
    <property type="match status" value="1"/>
</dbReference>
<dbReference type="Gene3D" id="1.10.1050.10">
    <property type="entry name" value="Ribosomal Protein S4 Delta 41, Chain A, domain 1"/>
    <property type="match status" value="1"/>
</dbReference>
<dbReference type="Gene3D" id="3.10.290.10">
    <property type="entry name" value="RNA-binding S4 domain"/>
    <property type="match status" value="1"/>
</dbReference>
<dbReference type="HAMAP" id="MF_01306_B">
    <property type="entry name" value="Ribosomal_uS4_B"/>
    <property type="match status" value="1"/>
</dbReference>
<dbReference type="InterPro" id="IPR022801">
    <property type="entry name" value="Ribosomal_uS4"/>
</dbReference>
<dbReference type="InterPro" id="IPR005709">
    <property type="entry name" value="Ribosomal_uS4_bac-type"/>
</dbReference>
<dbReference type="InterPro" id="IPR018079">
    <property type="entry name" value="Ribosomal_uS4_CS"/>
</dbReference>
<dbReference type="InterPro" id="IPR001912">
    <property type="entry name" value="Ribosomal_uS4_N"/>
</dbReference>
<dbReference type="InterPro" id="IPR002942">
    <property type="entry name" value="S4_RNA-bd"/>
</dbReference>
<dbReference type="InterPro" id="IPR036986">
    <property type="entry name" value="S4_RNA-bd_sf"/>
</dbReference>
<dbReference type="NCBIfam" id="NF003717">
    <property type="entry name" value="PRK05327.1"/>
    <property type="match status" value="1"/>
</dbReference>
<dbReference type="NCBIfam" id="TIGR01017">
    <property type="entry name" value="rpsD_bact"/>
    <property type="match status" value="1"/>
</dbReference>
<dbReference type="PANTHER" id="PTHR11831">
    <property type="entry name" value="30S 40S RIBOSOMAL PROTEIN"/>
    <property type="match status" value="1"/>
</dbReference>
<dbReference type="PANTHER" id="PTHR11831:SF4">
    <property type="entry name" value="SMALL RIBOSOMAL SUBUNIT PROTEIN US4M"/>
    <property type="match status" value="1"/>
</dbReference>
<dbReference type="Pfam" id="PF00163">
    <property type="entry name" value="Ribosomal_S4"/>
    <property type="match status" value="1"/>
</dbReference>
<dbReference type="Pfam" id="PF01479">
    <property type="entry name" value="S4"/>
    <property type="match status" value="1"/>
</dbReference>
<dbReference type="SMART" id="SM01390">
    <property type="entry name" value="Ribosomal_S4"/>
    <property type="match status" value="1"/>
</dbReference>
<dbReference type="SMART" id="SM00363">
    <property type="entry name" value="S4"/>
    <property type="match status" value="1"/>
</dbReference>
<dbReference type="SUPFAM" id="SSF55174">
    <property type="entry name" value="Alpha-L RNA-binding motif"/>
    <property type="match status" value="1"/>
</dbReference>
<dbReference type="PROSITE" id="PS00632">
    <property type="entry name" value="RIBOSOMAL_S4"/>
    <property type="match status" value="1"/>
</dbReference>
<dbReference type="PROSITE" id="PS50889">
    <property type="entry name" value="S4"/>
    <property type="match status" value="1"/>
</dbReference>